<feature type="chain" id="PRO_0000415277" description="Serine/threonine-protein kinase N">
    <location>
        <begin position="1"/>
        <end position="1190"/>
    </location>
</feature>
<feature type="domain" description="REM-1 1" evidence="5">
    <location>
        <begin position="28"/>
        <end position="102"/>
    </location>
</feature>
<feature type="domain" description="REM-1 2" evidence="5">
    <location>
        <begin position="142"/>
        <end position="219"/>
    </location>
</feature>
<feature type="domain" description="REM-1 3" evidence="5">
    <location>
        <begin position="242"/>
        <end position="322"/>
    </location>
</feature>
<feature type="domain" description="C2" evidence="2">
    <location>
        <begin position="359"/>
        <end position="515"/>
    </location>
</feature>
<feature type="domain" description="Protein kinase" evidence="3">
    <location>
        <begin position="863"/>
        <end position="1122"/>
    </location>
</feature>
<feature type="domain" description="AGC-kinase C-terminal" evidence="4">
    <location>
        <begin position="1123"/>
        <end position="1190"/>
    </location>
</feature>
<feature type="region of interest" description="Disordered" evidence="7">
    <location>
        <begin position="395"/>
        <end position="415"/>
    </location>
</feature>
<feature type="region of interest" description="Disordered" evidence="7">
    <location>
        <begin position="572"/>
        <end position="715"/>
    </location>
</feature>
<feature type="region of interest" description="Disordered" evidence="7">
    <location>
        <begin position="757"/>
        <end position="787"/>
    </location>
</feature>
<feature type="region of interest" description="Disordered" evidence="7">
    <location>
        <begin position="811"/>
        <end position="832"/>
    </location>
</feature>
<feature type="compositionally biased region" description="Basic and acidic residues" evidence="7">
    <location>
        <begin position="395"/>
        <end position="404"/>
    </location>
</feature>
<feature type="compositionally biased region" description="Low complexity" evidence="7">
    <location>
        <begin position="576"/>
        <end position="588"/>
    </location>
</feature>
<feature type="compositionally biased region" description="Low complexity" evidence="7">
    <location>
        <begin position="767"/>
        <end position="787"/>
    </location>
</feature>
<feature type="active site" description="Proton acceptor" evidence="3 6">
    <location>
        <position position="988"/>
    </location>
</feature>
<feature type="binding site" evidence="3">
    <location>
        <begin position="869"/>
        <end position="877"/>
    </location>
    <ligand>
        <name>ATP</name>
        <dbReference type="ChEBI" id="CHEBI:30616"/>
    </ligand>
</feature>
<feature type="binding site" evidence="3">
    <location>
        <position position="892"/>
    </location>
    <ligand>
        <name>ATP</name>
        <dbReference type="ChEBI" id="CHEBI:30616"/>
    </ligand>
</feature>
<feature type="splice variant" id="VSP_042188" description="In isoform 2." evidence="11">
    <original>E</original>
    <variation>EARISLVHITLEPINASRTTSCLIEEVAEPDSQPEIKPVAEAQSAKVSEACVESILPETVEKLETADQVQQ</variation>
    <location>
        <position position="729"/>
    </location>
</feature>
<feature type="mutagenesis site" description="Inhibits interaction with Rac1 but not Rho1, does not alter subcellular localization and is able to rescue loss-of-function phenotype lethality." evidence="8 9">
    <original>G</original>
    <variation>A</variation>
    <location>
        <position position="58"/>
    </location>
</feature>
<feature type="mutagenesis site" description="Shows some nuclear localization." evidence="9">
    <original>K</original>
    <variation>D</variation>
    <location>
        <position position="892"/>
    </location>
</feature>
<feature type="sequence conflict" description="In Ref. 3; ACV82450/ACU64820." evidence="12" ref="3">
    <original>A</original>
    <variation>V</variation>
    <location>
        <position position="680"/>
    </location>
</feature>
<protein>
    <recommendedName>
        <fullName>Serine/threonine-protein kinase N</fullName>
        <ecNumber>2.7.11.13</ecNumber>
    </recommendedName>
    <alternativeName>
        <fullName>Protein kinase related to PKN</fullName>
    </alternativeName>
</protein>
<gene>
    <name type="primary">Pkn</name>
    <name type="synonym">Dpkn</name>
    <name type="ORF">CG2049</name>
</gene>
<name>PKN_DROME</name>
<organism>
    <name type="scientific">Drosophila melanogaster</name>
    <name type="common">Fruit fly</name>
    <dbReference type="NCBI Taxonomy" id="7227"/>
    <lineage>
        <taxon>Eukaryota</taxon>
        <taxon>Metazoa</taxon>
        <taxon>Ecdysozoa</taxon>
        <taxon>Arthropoda</taxon>
        <taxon>Hexapoda</taxon>
        <taxon>Insecta</taxon>
        <taxon>Pterygota</taxon>
        <taxon>Neoptera</taxon>
        <taxon>Endopterygota</taxon>
        <taxon>Diptera</taxon>
        <taxon>Brachycera</taxon>
        <taxon>Muscomorpha</taxon>
        <taxon>Ephydroidea</taxon>
        <taxon>Drosophilidae</taxon>
        <taxon>Drosophila</taxon>
        <taxon>Sophophora</taxon>
    </lineage>
</organism>
<sequence>MSDSYYQGEYIKHPVLYELSHKYGFTENLPESCMSIRLEEIKEAIRREIRKELKIKEGAEKLREVAKDRRSLSDVAVLVKKSKSKLAELKSELQELESQILLTSANTAVNSNGQESITACIDPNGGFLVSGAVGGLGGGNTALEGGAPATANDKVLASLEKQLQIEMKVKTGAENMIQSLGIGCDKKLLAEAHQMLADSKAKIEFLRLRIIKVKQNREQADRLKASRQMIDEHGQTIGGNNSSQPQSLETTLEERIEELRHRLRIEAAVVDGAKNVIRTLQTANRAPDKKALQEAHGRLSESSRKLDLLRYSLDLRRQELPADSPAAQQLKTELQIVQLSTSPAPVTYTSLQSGQAGILGGKPYQSVSSLGRCASVTGKLEVRLLGCQDLLEDVPGRSRRDKDNNSSPGDLRSFVKGVTSRSSSKSYSVKDETSIEIMAVIKLDNITVGQTSWKQCSQQAWDQRFSIDLDRSRELEIGVYWRDWRSLCAVKVLRLEEFIDDVRHGMALQLEPQGLLFAEVKFLNPMISQKPKLRRQRMIFNRQQAKNISRAKQMNINVATWGRLLKRNAPNHVHMGSAGSGSSLTGSSPMVVGGSRDSESPISRTPSSDALVEPEPYTPGEQAQNLEFDPDAGINEHVETPGEYPDPAASGLSGMRPLSMHMQGISVLPPESPPVATGAAGRPNTLSLQMPGASKGQVIQGGRTAAPTTAPPPPPVLKATSTTPILDQEVIPQLGKLYVGSSQQQYAQQSSPIIQEPATPTIYGNSAAAGAPQFPQPAQRQEKQPPQQQPIYANQYELNVAKAAAAASVYSPSSSTTSNSNQQQQQQRRNVARGLQYRESGGLETGRAGKQPPNAGMLSMDNFRLLSVLGRGHFGKVILSQLRSNNQYYAIKALKKGDIIARDEVESLLSEKRIFEVANAMRHPFLVNLYSCFQTEQHVCFVMEYAAGGDLMMHIHTDVFLEPRAVFYAACVVLGLQYLHENKIIYRDLKLDNLLLDTEGYVKIADFGLCKEGMGFGDRTGTFCGTPEFLAPEVLTETSYTRAVDWWGLGVLIFEMLVGESPFPGDDEEEVFDSIVNDEVRYPRFLSLEAIAVMRRLLRKNPERRLGSSERDAEDVKKQAFFRSIVWDDLLLRKVKPPFVPTINHLEDVSNFDEEFTSEKAQLTPPKEPRHLTEEEQLLFQDFSYTAEWC</sequence>
<comment type="function">
    <text evidence="1 8 9">Pkc-related serine/threonine-protein kinase and Rho/Rac effector protein that participates in specific signal transduction responses in the cell. May play a role in the regulation of cell cycle progression, actin cytoskeleton assembly, cell migration, cell adhesion and transcription activation signaling processes (By similarity). Plays a role in regulating Rho-mediated dorsal closure during embryogenesis.</text>
</comment>
<comment type="catalytic activity">
    <reaction>
        <text>L-seryl-[protein] + ATP = O-phospho-L-seryl-[protein] + ADP + H(+)</text>
        <dbReference type="Rhea" id="RHEA:17989"/>
        <dbReference type="Rhea" id="RHEA-COMP:9863"/>
        <dbReference type="Rhea" id="RHEA-COMP:11604"/>
        <dbReference type="ChEBI" id="CHEBI:15378"/>
        <dbReference type="ChEBI" id="CHEBI:29999"/>
        <dbReference type="ChEBI" id="CHEBI:30616"/>
        <dbReference type="ChEBI" id="CHEBI:83421"/>
        <dbReference type="ChEBI" id="CHEBI:456216"/>
        <dbReference type="EC" id="2.7.11.13"/>
    </reaction>
</comment>
<comment type="catalytic activity">
    <reaction>
        <text>L-threonyl-[protein] + ATP = O-phospho-L-threonyl-[protein] + ADP + H(+)</text>
        <dbReference type="Rhea" id="RHEA:46608"/>
        <dbReference type="Rhea" id="RHEA-COMP:11060"/>
        <dbReference type="Rhea" id="RHEA-COMP:11605"/>
        <dbReference type="ChEBI" id="CHEBI:15378"/>
        <dbReference type="ChEBI" id="CHEBI:30013"/>
        <dbReference type="ChEBI" id="CHEBI:30616"/>
        <dbReference type="ChEBI" id="CHEBI:61977"/>
        <dbReference type="ChEBI" id="CHEBI:456216"/>
        <dbReference type="EC" id="2.7.11.13"/>
    </reaction>
</comment>
<comment type="activity regulation">
    <text evidence="1 8 9">Activated by lipids, particularly cardiolipin and to a lesser extent by other acidic phospholipids and unsaturated fatty acids. Two specific sites, Thr-1022 (activation loop of the kinase domain) and Thr-1164 (turn motif), may be needed to be phosphorylated for its full activation (By similarity). Kinase activity is activated upon binding to GTP-bound Rho/Rac GTPases.</text>
</comment>
<comment type="subunit">
    <text evidence="8 9">Interacts (via N-terminus) with Rho1 (via REM repeats), Rac1 (via REM 1 repeat) and Rac2.</text>
</comment>
<comment type="subcellular location">
    <subcellularLocation>
        <location evidence="9">Cytoplasm</location>
    </subcellularLocation>
    <subcellularLocation>
        <location evidence="1">Nucleus</location>
    </subcellularLocation>
    <subcellularLocation>
        <location evidence="1">Membrane</location>
    </subcellularLocation>
    <subcellularLocation>
        <location evidence="1">Cell projection</location>
        <location evidence="1">Lamellipodium</location>
    </subcellularLocation>
    <subcellularLocation>
        <location evidence="1">Cytoplasm</location>
        <location evidence="1">Cytoskeleton</location>
    </subcellularLocation>
    <subcellularLocation>
        <location evidence="1">Cleavage furrow</location>
    </subcellularLocation>
    <subcellularLocation>
        <location evidence="1">Midbody</location>
    </subcellularLocation>
    <subcellularLocation>
        <location evidence="1">Cell junction</location>
    </subcellularLocation>
</comment>
<comment type="alternative products">
    <event type="alternative splicing"/>
    <isoform>
        <id>A1Z7T0-1</id>
        <name>1</name>
        <sequence type="displayed"/>
    </isoform>
    <isoform>
        <id>A1Z7T0-2</id>
        <name>2</name>
        <name>Pkn-RB</name>
        <sequence type="described" ref="VSP_042188"/>
    </isoform>
</comment>
<comment type="developmental stage">
    <text evidence="8 10">Expressed at the leading edge (LE) cells and in two pairs of discontinuous stripes on the epidermis of each segment at stage 13. Expressed in the anterior and posterior spiracles, the pharynx and the mouth tip at stage 16.</text>
</comment>
<comment type="PTM">
    <text evidence="1">Phosphorylated (By similarity). Autophosphorylated; autophosphorylation is stimulated by GTP-bound Rho/Rac GTPases.</text>
</comment>
<comment type="disruption phenotype">
    <text evidence="8">Embryonic lethal due to defects in dorsal closure.</text>
</comment>
<comment type="similarity">
    <text evidence="3">Belongs to the protein kinase superfamily. Ser/Thr protein kinase family.</text>
</comment>
<evidence type="ECO:0000250" key="1"/>
<evidence type="ECO:0000255" key="2">
    <source>
        <dbReference type="PROSITE-ProRule" id="PRU00041"/>
    </source>
</evidence>
<evidence type="ECO:0000255" key="3">
    <source>
        <dbReference type="PROSITE-ProRule" id="PRU00159"/>
    </source>
</evidence>
<evidence type="ECO:0000255" key="4">
    <source>
        <dbReference type="PROSITE-ProRule" id="PRU00618"/>
    </source>
</evidence>
<evidence type="ECO:0000255" key="5">
    <source>
        <dbReference type="PROSITE-ProRule" id="PRU01207"/>
    </source>
</evidence>
<evidence type="ECO:0000255" key="6">
    <source>
        <dbReference type="PROSITE-ProRule" id="PRU10027"/>
    </source>
</evidence>
<evidence type="ECO:0000256" key="7">
    <source>
        <dbReference type="SAM" id="MobiDB-lite"/>
    </source>
</evidence>
<evidence type="ECO:0000269" key="8">
    <source>
    </source>
</evidence>
<evidence type="ECO:0000269" key="9">
    <source>
    </source>
</evidence>
<evidence type="ECO:0000269" key="10">
    <source>
    </source>
</evidence>
<evidence type="ECO:0000303" key="11">
    <source ref="3"/>
</evidence>
<evidence type="ECO:0000305" key="12"/>
<reference key="1">
    <citation type="journal article" date="2000" name="Science">
        <title>The genome sequence of Drosophila melanogaster.</title>
        <authorList>
            <person name="Adams M.D."/>
            <person name="Celniker S.E."/>
            <person name="Holt R.A."/>
            <person name="Evans C.A."/>
            <person name="Gocayne J.D."/>
            <person name="Amanatides P.G."/>
            <person name="Scherer S.E."/>
            <person name="Li P.W."/>
            <person name="Hoskins R.A."/>
            <person name="Galle R.F."/>
            <person name="George R.A."/>
            <person name="Lewis S.E."/>
            <person name="Richards S."/>
            <person name="Ashburner M."/>
            <person name="Henderson S.N."/>
            <person name="Sutton G.G."/>
            <person name="Wortman J.R."/>
            <person name="Yandell M.D."/>
            <person name="Zhang Q."/>
            <person name="Chen L.X."/>
            <person name="Brandon R.C."/>
            <person name="Rogers Y.-H.C."/>
            <person name="Blazej R.G."/>
            <person name="Champe M."/>
            <person name="Pfeiffer B.D."/>
            <person name="Wan K.H."/>
            <person name="Doyle C."/>
            <person name="Baxter E.G."/>
            <person name="Helt G."/>
            <person name="Nelson C.R."/>
            <person name="Miklos G.L.G."/>
            <person name="Abril J.F."/>
            <person name="Agbayani A."/>
            <person name="An H.-J."/>
            <person name="Andrews-Pfannkoch C."/>
            <person name="Baldwin D."/>
            <person name="Ballew R.M."/>
            <person name="Basu A."/>
            <person name="Baxendale J."/>
            <person name="Bayraktaroglu L."/>
            <person name="Beasley E.M."/>
            <person name="Beeson K.Y."/>
            <person name="Benos P.V."/>
            <person name="Berman B.P."/>
            <person name="Bhandari D."/>
            <person name="Bolshakov S."/>
            <person name="Borkova D."/>
            <person name="Botchan M.R."/>
            <person name="Bouck J."/>
            <person name="Brokstein P."/>
            <person name="Brottier P."/>
            <person name="Burtis K.C."/>
            <person name="Busam D.A."/>
            <person name="Butler H."/>
            <person name="Cadieu E."/>
            <person name="Center A."/>
            <person name="Chandra I."/>
            <person name="Cherry J.M."/>
            <person name="Cawley S."/>
            <person name="Dahlke C."/>
            <person name="Davenport L.B."/>
            <person name="Davies P."/>
            <person name="de Pablos B."/>
            <person name="Delcher A."/>
            <person name="Deng Z."/>
            <person name="Mays A.D."/>
            <person name="Dew I."/>
            <person name="Dietz S.M."/>
            <person name="Dodson K."/>
            <person name="Doup L.E."/>
            <person name="Downes M."/>
            <person name="Dugan-Rocha S."/>
            <person name="Dunkov B.C."/>
            <person name="Dunn P."/>
            <person name="Durbin K.J."/>
            <person name="Evangelista C.C."/>
            <person name="Ferraz C."/>
            <person name="Ferriera S."/>
            <person name="Fleischmann W."/>
            <person name="Fosler C."/>
            <person name="Gabrielian A.E."/>
            <person name="Garg N.S."/>
            <person name="Gelbart W.M."/>
            <person name="Glasser K."/>
            <person name="Glodek A."/>
            <person name="Gong F."/>
            <person name="Gorrell J.H."/>
            <person name="Gu Z."/>
            <person name="Guan P."/>
            <person name="Harris M."/>
            <person name="Harris N.L."/>
            <person name="Harvey D.A."/>
            <person name="Heiman T.J."/>
            <person name="Hernandez J.R."/>
            <person name="Houck J."/>
            <person name="Hostin D."/>
            <person name="Houston K.A."/>
            <person name="Howland T.J."/>
            <person name="Wei M.-H."/>
            <person name="Ibegwam C."/>
            <person name="Jalali M."/>
            <person name="Kalush F."/>
            <person name="Karpen G.H."/>
            <person name="Ke Z."/>
            <person name="Kennison J.A."/>
            <person name="Ketchum K.A."/>
            <person name="Kimmel B.E."/>
            <person name="Kodira C.D."/>
            <person name="Kraft C.L."/>
            <person name="Kravitz S."/>
            <person name="Kulp D."/>
            <person name="Lai Z."/>
            <person name="Lasko P."/>
            <person name="Lei Y."/>
            <person name="Levitsky A.A."/>
            <person name="Li J.H."/>
            <person name="Li Z."/>
            <person name="Liang Y."/>
            <person name="Lin X."/>
            <person name="Liu X."/>
            <person name="Mattei B."/>
            <person name="McIntosh T.C."/>
            <person name="McLeod M.P."/>
            <person name="McPherson D."/>
            <person name="Merkulov G."/>
            <person name="Milshina N.V."/>
            <person name="Mobarry C."/>
            <person name="Morris J."/>
            <person name="Moshrefi A."/>
            <person name="Mount S.M."/>
            <person name="Moy M."/>
            <person name="Murphy B."/>
            <person name="Murphy L."/>
            <person name="Muzny D.M."/>
            <person name="Nelson D.L."/>
            <person name="Nelson D.R."/>
            <person name="Nelson K.A."/>
            <person name="Nixon K."/>
            <person name="Nusskern D.R."/>
            <person name="Pacleb J.M."/>
            <person name="Palazzolo M."/>
            <person name="Pittman G.S."/>
            <person name="Pan S."/>
            <person name="Pollard J."/>
            <person name="Puri V."/>
            <person name="Reese M.G."/>
            <person name="Reinert K."/>
            <person name="Remington K."/>
            <person name="Saunders R.D.C."/>
            <person name="Scheeler F."/>
            <person name="Shen H."/>
            <person name="Shue B.C."/>
            <person name="Siden-Kiamos I."/>
            <person name="Simpson M."/>
            <person name="Skupski M.P."/>
            <person name="Smith T.J."/>
            <person name="Spier E."/>
            <person name="Spradling A.C."/>
            <person name="Stapleton M."/>
            <person name="Strong R."/>
            <person name="Sun E."/>
            <person name="Svirskas R."/>
            <person name="Tector C."/>
            <person name="Turner R."/>
            <person name="Venter E."/>
            <person name="Wang A.H."/>
            <person name="Wang X."/>
            <person name="Wang Z.-Y."/>
            <person name="Wassarman D.A."/>
            <person name="Weinstock G.M."/>
            <person name="Weissenbach J."/>
            <person name="Williams S.M."/>
            <person name="Woodage T."/>
            <person name="Worley K.C."/>
            <person name="Wu D."/>
            <person name="Yang S."/>
            <person name="Yao Q.A."/>
            <person name="Ye J."/>
            <person name="Yeh R.-F."/>
            <person name="Zaveri J.S."/>
            <person name="Zhan M."/>
            <person name="Zhang G."/>
            <person name="Zhao Q."/>
            <person name="Zheng L."/>
            <person name="Zheng X.H."/>
            <person name="Zhong F.N."/>
            <person name="Zhong W."/>
            <person name="Zhou X."/>
            <person name="Zhu S.C."/>
            <person name="Zhu X."/>
            <person name="Smith H.O."/>
            <person name="Gibbs R.A."/>
            <person name="Myers E.W."/>
            <person name="Rubin G.M."/>
            <person name="Venter J.C."/>
        </authorList>
    </citation>
    <scope>NUCLEOTIDE SEQUENCE [LARGE SCALE GENOMIC DNA]</scope>
    <source>
        <strain>Berkeley</strain>
    </source>
</reference>
<reference key="2">
    <citation type="journal article" date="2002" name="Genome Biol.">
        <title>Annotation of the Drosophila melanogaster euchromatic genome: a systematic review.</title>
        <authorList>
            <person name="Misra S."/>
            <person name="Crosby M.A."/>
            <person name="Mungall C.J."/>
            <person name="Matthews B.B."/>
            <person name="Campbell K.S."/>
            <person name="Hradecky P."/>
            <person name="Huang Y."/>
            <person name="Kaminker J.S."/>
            <person name="Millburn G.H."/>
            <person name="Prochnik S.E."/>
            <person name="Smith C.D."/>
            <person name="Tupy J.L."/>
            <person name="Whitfield E.J."/>
            <person name="Bayraktaroglu L."/>
            <person name="Berman B.P."/>
            <person name="Bettencourt B.R."/>
            <person name="Celniker S.E."/>
            <person name="de Grey A.D.N.J."/>
            <person name="Drysdale R.A."/>
            <person name="Harris N.L."/>
            <person name="Richter J."/>
            <person name="Russo S."/>
            <person name="Schroeder A.J."/>
            <person name="Shu S.Q."/>
            <person name="Stapleton M."/>
            <person name="Yamada C."/>
            <person name="Ashburner M."/>
            <person name="Gelbart W.M."/>
            <person name="Rubin G.M."/>
            <person name="Lewis S.E."/>
        </authorList>
    </citation>
    <scope>GENOME REANNOTATION</scope>
    <source>
        <strain>Berkeley</strain>
    </source>
</reference>
<reference key="3">
    <citation type="submission" date="2009-08" db="EMBL/GenBank/DDBJ databases">
        <authorList>
            <person name="Carlson J."/>
            <person name="Booth B."/>
            <person name="Frise E."/>
            <person name="Park S."/>
            <person name="Wan K."/>
            <person name="Yu C."/>
            <person name="Celniker S."/>
        </authorList>
    </citation>
    <scope>NUCLEOTIDE SEQUENCE [LARGE SCALE MRNA] (ISOFORM 2)</scope>
    <source>
        <strain>Berkeley</strain>
        <tissue>Head</tissue>
    </source>
</reference>
<reference key="4">
    <citation type="journal article" date="1997" name="Biochem. Biophys. Res. Commun.">
        <title>Identification of a novel Drosophila protein kinase highly homologous to protein kinase N (PKN).</title>
        <authorList>
            <person name="Ueno N."/>
            <person name="Oishi I."/>
            <person name="Sugiyama S."/>
            <person name="Nishida Y."/>
            <person name="Minami Y."/>
            <person name="Yamamura H."/>
        </authorList>
    </citation>
    <scope>DEVELOPMENTAL STAGE</scope>
</reference>
<reference key="5">
    <citation type="journal article" date="1999" name="Genes Dev.">
        <title>The Drosophila Pkn protein kinase is a Rho/Rac effector target required for dorsal closure during embryogenesis.</title>
        <authorList>
            <person name="Lu Y."/>
            <person name="Settleman J."/>
        </authorList>
    </citation>
    <scope>FUNCTION</scope>
    <scope>ACTIVITY REGULATION</scope>
    <scope>INTERACTION WITH RHO1; RAC1 AND RAC2</scope>
    <scope>DISRUPTION PHENOTYPE</scope>
    <scope>AUTOPHOSPHORYLATION</scope>
    <scope>MUTAGENESIS OF GLY-58</scope>
    <scope>DEVELOPMENTAL STAGE</scope>
</reference>
<reference key="6">
    <citation type="journal article" date="2007" name="Genetics">
        <title>A rho-binding protein kinase C-like activity is required for the function of protein kinase N in Drosophila development.</title>
        <authorList>
            <person name="Betson M."/>
            <person name="Settleman J."/>
        </authorList>
    </citation>
    <scope>FUNCTION</scope>
    <scope>ACTIVITY REGULATION</scope>
    <scope>INTERACTION WITH RHO1 AND RAC1</scope>
    <scope>MUTAGENESIS OF GLY-58 AND LYS-892</scope>
    <scope>SUBCELLULAR LOCATION</scope>
</reference>
<accession>A1Z7T0</accession>
<accession>C7LA81</accession>
<keyword id="KW-0025">Alternative splicing</keyword>
<keyword id="KW-0067">ATP-binding</keyword>
<keyword id="KW-0130">Cell adhesion</keyword>
<keyword id="KW-0131">Cell cycle</keyword>
<keyword id="KW-0132">Cell division</keyword>
<keyword id="KW-0965">Cell junction</keyword>
<keyword id="KW-0966">Cell projection</keyword>
<keyword id="KW-0175">Coiled coil</keyword>
<keyword id="KW-0963">Cytoplasm</keyword>
<keyword id="KW-0206">Cytoskeleton</keyword>
<keyword id="KW-0217">Developmental protein</keyword>
<keyword id="KW-0418">Kinase</keyword>
<keyword id="KW-0472">Membrane</keyword>
<keyword id="KW-0547">Nucleotide-binding</keyword>
<keyword id="KW-0539">Nucleus</keyword>
<keyword id="KW-0597">Phosphoprotein</keyword>
<keyword id="KW-1185">Reference proteome</keyword>
<keyword id="KW-0677">Repeat</keyword>
<keyword id="KW-0723">Serine/threonine-protein kinase</keyword>
<keyword id="KW-0804">Transcription</keyword>
<keyword id="KW-0805">Transcription regulation</keyword>
<keyword id="KW-0808">Transferase</keyword>
<proteinExistence type="evidence at protein level"/>
<dbReference type="EC" id="2.7.11.13"/>
<dbReference type="EMBL" id="AE013599">
    <property type="protein sequence ID" value="AAF58958.2"/>
    <property type="molecule type" value="Genomic_DNA"/>
</dbReference>
<dbReference type="EMBL" id="BT099631">
    <property type="protein sequence ID" value="ACU64820.1"/>
    <property type="molecule type" value="mRNA"/>
</dbReference>
<dbReference type="EMBL" id="BT099751">
    <property type="protein sequence ID" value="ACV82450.1"/>
    <property type="molecule type" value="mRNA"/>
</dbReference>
<dbReference type="RefSeq" id="NP_001246220.1">
    <molecule id="A1Z7T0-2"/>
    <property type="nucleotide sequence ID" value="NM_001259291.2"/>
</dbReference>
<dbReference type="RefSeq" id="NP_788290.1">
    <molecule id="A1Z7T0-1"/>
    <property type="nucleotide sequence ID" value="NM_176110.2"/>
</dbReference>
<dbReference type="SMR" id="A1Z7T0"/>
<dbReference type="BioGRID" id="61787">
    <property type="interactions" value="14"/>
</dbReference>
<dbReference type="FunCoup" id="A1Z7T0">
    <property type="interactions" value="1392"/>
</dbReference>
<dbReference type="IntAct" id="A1Z7T0">
    <property type="interactions" value="14"/>
</dbReference>
<dbReference type="STRING" id="7227.FBpp0111810"/>
<dbReference type="EnsemblMetazoa" id="FBtr0088601">
    <molecule id="A1Z7T0-1"/>
    <property type="protein sequence ID" value="FBpp0087682"/>
    <property type="gene ID" value="FBgn0020621"/>
</dbReference>
<dbReference type="EnsemblMetazoa" id="FBtr0308206">
    <molecule id="A1Z7T0-2"/>
    <property type="protein sequence ID" value="FBpp0300526"/>
    <property type="gene ID" value="FBgn0020621"/>
</dbReference>
<dbReference type="GeneID" id="35950"/>
<dbReference type="KEGG" id="dme:Dmel_CG2049"/>
<dbReference type="UCSC" id="CG2049-RB">
    <molecule id="A1Z7T0-1"/>
    <property type="organism name" value="d. melanogaster"/>
</dbReference>
<dbReference type="AGR" id="FB:FBgn0020621"/>
<dbReference type="CTD" id="35950"/>
<dbReference type="FlyBase" id="FBgn0020621">
    <property type="gene designation" value="Pkn"/>
</dbReference>
<dbReference type="VEuPathDB" id="VectorBase:FBgn0020621"/>
<dbReference type="eggNOG" id="KOG0694">
    <property type="taxonomic scope" value="Eukaryota"/>
</dbReference>
<dbReference type="GeneTree" id="ENSGT00940000168432"/>
<dbReference type="InParanoid" id="A1Z7T0"/>
<dbReference type="OrthoDB" id="63267at2759"/>
<dbReference type="Reactome" id="R-DME-5625740">
    <property type="pathway name" value="RHO GTPases activate PKNs"/>
</dbReference>
<dbReference type="Reactome" id="R-DME-5625886">
    <property type="pathway name" value="Activated PKN1 stimulates transcription of AR (androgen receptor) regulated genes KLK2 and KLK3"/>
</dbReference>
<dbReference type="Reactome" id="R-DME-8980692">
    <property type="pathway name" value="RHOA GTPase cycle"/>
</dbReference>
<dbReference type="Reactome" id="R-DME-9013026">
    <property type="pathway name" value="RHOB GTPase cycle"/>
</dbReference>
<dbReference type="Reactome" id="R-DME-9013149">
    <property type="pathway name" value="RAC1 GTPase cycle"/>
</dbReference>
<dbReference type="Reactome" id="R-DME-9856530">
    <property type="pathway name" value="High laminar flow shear stress activates signaling by PIEZO1 and PECAM1:CDH5:KDR in endothelial cells"/>
</dbReference>
<dbReference type="SignaLink" id="A1Z7T0"/>
<dbReference type="BioGRID-ORCS" id="35950">
    <property type="hits" value="0 hits in 3 CRISPR screens"/>
</dbReference>
<dbReference type="ChiTaRS" id="Pkn">
    <property type="organism name" value="fly"/>
</dbReference>
<dbReference type="GenomeRNAi" id="35950"/>
<dbReference type="PRO" id="PR:A1Z7T0"/>
<dbReference type="Proteomes" id="UP000000803">
    <property type="component" value="Chromosome 2R"/>
</dbReference>
<dbReference type="Bgee" id="FBgn0020621">
    <property type="expression patterns" value="Expressed in fat body cell in haltere and 219 other cell types or tissues"/>
</dbReference>
<dbReference type="ExpressionAtlas" id="A1Z7T0">
    <property type="expression patterns" value="baseline and differential"/>
</dbReference>
<dbReference type="GO" id="GO:0070161">
    <property type="term" value="C:anchoring junction"/>
    <property type="evidence" value="ECO:0007669"/>
    <property type="project" value="UniProtKB-SubCell"/>
</dbReference>
<dbReference type="GO" id="GO:0045179">
    <property type="term" value="C:apical cortex"/>
    <property type="evidence" value="ECO:0000314"/>
    <property type="project" value="FlyBase"/>
</dbReference>
<dbReference type="GO" id="GO:0032154">
    <property type="term" value="C:cleavage furrow"/>
    <property type="evidence" value="ECO:0007669"/>
    <property type="project" value="UniProtKB-SubCell"/>
</dbReference>
<dbReference type="GO" id="GO:0005737">
    <property type="term" value="C:cytoplasm"/>
    <property type="evidence" value="ECO:0000314"/>
    <property type="project" value="UniProtKB"/>
</dbReference>
<dbReference type="GO" id="GO:0005856">
    <property type="term" value="C:cytoskeleton"/>
    <property type="evidence" value="ECO:0007669"/>
    <property type="project" value="UniProtKB-SubCell"/>
</dbReference>
<dbReference type="GO" id="GO:0005829">
    <property type="term" value="C:cytosol"/>
    <property type="evidence" value="ECO:0007005"/>
    <property type="project" value="FlyBase"/>
</dbReference>
<dbReference type="GO" id="GO:0030027">
    <property type="term" value="C:lamellipodium"/>
    <property type="evidence" value="ECO:0007669"/>
    <property type="project" value="UniProtKB-SubCell"/>
</dbReference>
<dbReference type="GO" id="GO:0030496">
    <property type="term" value="C:midbody"/>
    <property type="evidence" value="ECO:0007669"/>
    <property type="project" value="UniProtKB-SubCell"/>
</dbReference>
<dbReference type="GO" id="GO:0005634">
    <property type="term" value="C:nucleus"/>
    <property type="evidence" value="ECO:0007669"/>
    <property type="project" value="UniProtKB-SubCell"/>
</dbReference>
<dbReference type="GO" id="GO:0005524">
    <property type="term" value="F:ATP binding"/>
    <property type="evidence" value="ECO:0007669"/>
    <property type="project" value="UniProtKB-KW"/>
</dbReference>
<dbReference type="GO" id="GO:0004697">
    <property type="term" value="F:diacylglycerol-dependent serine/threonine kinase activity"/>
    <property type="evidence" value="ECO:0007669"/>
    <property type="project" value="UniProtKB-EC"/>
</dbReference>
<dbReference type="GO" id="GO:0004672">
    <property type="term" value="F:protein kinase activity"/>
    <property type="evidence" value="ECO:0000314"/>
    <property type="project" value="FlyBase"/>
</dbReference>
<dbReference type="GO" id="GO:0106310">
    <property type="term" value="F:protein serine kinase activity"/>
    <property type="evidence" value="ECO:0007669"/>
    <property type="project" value="RHEA"/>
</dbReference>
<dbReference type="GO" id="GO:0004674">
    <property type="term" value="F:protein serine/threonine kinase activity"/>
    <property type="evidence" value="ECO:0000250"/>
    <property type="project" value="FlyBase"/>
</dbReference>
<dbReference type="GO" id="GO:0031267">
    <property type="term" value="F:small GTPase binding"/>
    <property type="evidence" value="ECO:0007669"/>
    <property type="project" value="InterPro"/>
</dbReference>
<dbReference type="GO" id="GO:0030036">
    <property type="term" value="P:actin cytoskeleton organization"/>
    <property type="evidence" value="ECO:0000315"/>
    <property type="project" value="FlyBase"/>
</dbReference>
<dbReference type="GO" id="GO:0007155">
    <property type="term" value="P:cell adhesion"/>
    <property type="evidence" value="ECO:0007669"/>
    <property type="project" value="UniProtKB-KW"/>
</dbReference>
<dbReference type="GO" id="GO:0007391">
    <property type="term" value="P:dorsal closure"/>
    <property type="evidence" value="ECO:0000315"/>
    <property type="project" value="UniProtKB"/>
</dbReference>
<dbReference type="GO" id="GO:0035556">
    <property type="term" value="P:intracellular signal transduction"/>
    <property type="evidence" value="ECO:0000318"/>
    <property type="project" value="GO_Central"/>
</dbReference>
<dbReference type="GO" id="GO:1902408">
    <property type="term" value="P:mitotic cytokinesis, division site positioning"/>
    <property type="evidence" value="ECO:0000315"/>
    <property type="project" value="FlyBase"/>
</dbReference>
<dbReference type="GO" id="GO:0090303">
    <property type="term" value="P:positive regulation of wound healing"/>
    <property type="evidence" value="ECO:0000315"/>
    <property type="project" value="FlyBase"/>
</dbReference>
<dbReference type="GO" id="GO:0046777">
    <property type="term" value="P:protein autophosphorylation"/>
    <property type="evidence" value="ECO:0000314"/>
    <property type="project" value="UniProtKB"/>
</dbReference>
<dbReference type="GO" id="GO:0007472">
    <property type="term" value="P:wing disc morphogenesis"/>
    <property type="evidence" value="ECO:0000315"/>
    <property type="project" value="UniProtKB"/>
</dbReference>
<dbReference type="CDD" id="cd11622">
    <property type="entry name" value="HR1_PKN_1"/>
    <property type="match status" value="1"/>
</dbReference>
<dbReference type="CDD" id="cd11623">
    <property type="entry name" value="HR1_PKN_2"/>
    <property type="match status" value="1"/>
</dbReference>
<dbReference type="CDD" id="cd11625">
    <property type="entry name" value="HR1_PKN_3"/>
    <property type="match status" value="1"/>
</dbReference>
<dbReference type="CDD" id="cd05589">
    <property type="entry name" value="STKc_PKN"/>
    <property type="match status" value="1"/>
</dbReference>
<dbReference type="FunFam" id="1.10.287.160:FF:000001">
    <property type="entry name" value="Putative serine/threonine-protein kinase N2"/>
    <property type="match status" value="1"/>
</dbReference>
<dbReference type="FunFam" id="1.10.287.160:FF:000002">
    <property type="entry name" value="Putative serine/threonine-protein kinase N2"/>
    <property type="match status" value="1"/>
</dbReference>
<dbReference type="FunFam" id="3.30.200.20:FF:000058">
    <property type="entry name" value="Putative serine/threonine-protein kinase N2"/>
    <property type="match status" value="1"/>
</dbReference>
<dbReference type="FunFam" id="1.10.287.160:FF:000008">
    <property type="entry name" value="serine/threonine-protein kinase N isoform X4"/>
    <property type="match status" value="1"/>
</dbReference>
<dbReference type="FunFam" id="1.10.510.10:FF:000038">
    <property type="entry name" value="serine/threonine-protein kinase N2 isoform X1"/>
    <property type="match status" value="1"/>
</dbReference>
<dbReference type="Gene3D" id="1.10.287.160">
    <property type="entry name" value="HR1 repeat"/>
    <property type="match status" value="3"/>
</dbReference>
<dbReference type="Gene3D" id="3.30.200.20">
    <property type="entry name" value="Phosphorylase Kinase, domain 1"/>
    <property type="match status" value="1"/>
</dbReference>
<dbReference type="Gene3D" id="1.10.510.10">
    <property type="entry name" value="Transferase(Phosphotransferase) domain 1"/>
    <property type="match status" value="1"/>
</dbReference>
<dbReference type="InterPro" id="IPR000961">
    <property type="entry name" value="AGC-kinase_C"/>
</dbReference>
<dbReference type="InterPro" id="IPR000008">
    <property type="entry name" value="C2_dom"/>
</dbReference>
<dbReference type="InterPro" id="IPR035892">
    <property type="entry name" value="C2_domain_sf"/>
</dbReference>
<dbReference type="InterPro" id="IPR011072">
    <property type="entry name" value="HR1_rho-bd"/>
</dbReference>
<dbReference type="InterPro" id="IPR036274">
    <property type="entry name" value="HR1_rpt_sf"/>
</dbReference>
<dbReference type="InterPro" id="IPR011009">
    <property type="entry name" value="Kinase-like_dom_sf"/>
</dbReference>
<dbReference type="InterPro" id="IPR017892">
    <property type="entry name" value="Pkinase_C"/>
</dbReference>
<dbReference type="InterPro" id="IPR037313">
    <property type="entry name" value="PKN_HR1_1"/>
</dbReference>
<dbReference type="InterPro" id="IPR000719">
    <property type="entry name" value="Prot_kinase_dom"/>
</dbReference>
<dbReference type="InterPro" id="IPR017441">
    <property type="entry name" value="Protein_kinase_ATP_BS"/>
</dbReference>
<dbReference type="InterPro" id="IPR008271">
    <property type="entry name" value="Ser/Thr_kinase_AS"/>
</dbReference>
<dbReference type="PANTHER" id="PTHR24351">
    <property type="entry name" value="RIBOSOMAL PROTEIN S6 KINASE"/>
    <property type="match status" value="1"/>
</dbReference>
<dbReference type="Pfam" id="PF02185">
    <property type="entry name" value="HR1"/>
    <property type="match status" value="3"/>
</dbReference>
<dbReference type="Pfam" id="PF00069">
    <property type="entry name" value="Pkinase"/>
    <property type="match status" value="1"/>
</dbReference>
<dbReference type="Pfam" id="PF00433">
    <property type="entry name" value="Pkinase_C"/>
    <property type="match status" value="1"/>
</dbReference>
<dbReference type="SMART" id="SM00239">
    <property type="entry name" value="C2"/>
    <property type="match status" value="1"/>
</dbReference>
<dbReference type="SMART" id="SM00742">
    <property type="entry name" value="Hr1"/>
    <property type="match status" value="3"/>
</dbReference>
<dbReference type="SMART" id="SM00133">
    <property type="entry name" value="S_TK_X"/>
    <property type="match status" value="1"/>
</dbReference>
<dbReference type="SMART" id="SM00220">
    <property type="entry name" value="S_TKc"/>
    <property type="match status" value="1"/>
</dbReference>
<dbReference type="SUPFAM" id="SSF49562">
    <property type="entry name" value="C2 domain (Calcium/lipid-binding domain, CaLB)"/>
    <property type="match status" value="1"/>
</dbReference>
<dbReference type="SUPFAM" id="SSF46585">
    <property type="entry name" value="HR1 repeat"/>
    <property type="match status" value="3"/>
</dbReference>
<dbReference type="SUPFAM" id="SSF56112">
    <property type="entry name" value="Protein kinase-like (PK-like)"/>
    <property type="match status" value="1"/>
</dbReference>
<dbReference type="PROSITE" id="PS51285">
    <property type="entry name" value="AGC_KINASE_CTER"/>
    <property type="match status" value="1"/>
</dbReference>
<dbReference type="PROSITE" id="PS50004">
    <property type="entry name" value="C2"/>
    <property type="match status" value="1"/>
</dbReference>
<dbReference type="PROSITE" id="PS00107">
    <property type="entry name" value="PROTEIN_KINASE_ATP"/>
    <property type="match status" value="1"/>
</dbReference>
<dbReference type="PROSITE" id="PS50011">
    <property type="entry name" value="PROTEIN_KINASE_DOM"/>
    <property type="match status" value="1"/>
</dbReference>
<dbReference type="PROSITE" id="PS00108">
    <property type="entry name" value="PROTEIN_KINASE_ST"/>
    <property type="match status" value="1"/>
</dbReference>
<dbReference type="PROSITE" id="PS51860">
    <property type="entry name" value="REM_1"/>
    <property type="match status" value="3"/>
</dbReference>